<accession>C0HL05</accession>
<proteinExistence type="evidence at protein level"/>
<keyword id="KW-0027">Amidation</keyword>
<keyword id="KW-0903">Direct protein sequencing</keyword>
<keyword id="KW-0964">Secreted</keyword>
<feature type="peptide" id="PRO_0000442757" description="Temporin-1R" evidence="1">
    <location>
        <begin position="1"/>
        <end position="13"/>
    </location>
</feature>
<feature type="modified residue" description="Phenylalanine amide" evidence="1">
    <location>
        <position position="13"/>
    </location>
</feature>
<comment type="subcellular location">
    <subcellularLocation>
        <location evidence="1">Secreted</location>
    </subcellularLocation>
</comment>
<comment type="tissue specificity">
    <text evidence="4">Expressed by the skin glands.</text>
</comment>
<comment type="mass spectrometry" mass="1163.7" method="Electrospray" evidence="1"/>
<comment type="similarity">
    <text evidence="3">Belongs to the frog skin active peptide (FSAP) family. Temporin subfamily.</text>
</comment>
<evidence type="ECO:0000269" key="1">
    <source>
    </source>
</evidence>
<evidence type="ECO:0000303" key="2">
    <source>
    </source>
</evidence>
<evidence type="ECO:0000305" key="3"/>
<evidence type="ECO:0000305" key="4">
    <source>
    </source>
</evidence>
<name>TP1_PELRI</name>
<dbReference type="GO" id="GO:0005576">
    <property type="term" value="C:extracellular region"/>
    <property type="evidence" value="ECO:0000314"/>
    <property type="project" value="UniProtKB"/>
</dbReference>
<protein>
    <recommendedName>
        <fullName evidence="2">Temporin-1R</fullName>
    </recommendedName>
</protein>
<sequence length="13" mass="1354">FLSGLVGALAKMF</sequence>
<reference evidence="3" key="1">
    <citation type="journal article" date="2017" name="Anal. Bioanal. Chem.">
        <title>Differentiation of frogs from two populations belonging to the Pelophylax esculentus complex by LC-MS/MS comparison of their skin peptidomes.</title>
        <authorList>
            <person name="Samgina T.Y."/>
            <person name="Artemenko K.A."/>
            <person name="Bergquist J."/>
            <person name="Trebse P."/>
            <person name="Torkar G."/>
            <person name="Tolpina M.D."/>
            <person name="Lebedev A.T."/>
        </authorList>
    </citation>
    <scope>PROTEIN SEQUENCE</scope>
    <scope>SUBCELLULAR LOCATION</scope>
    <scope>MASS SPECTROMETRY</scope>
    <scope>IDENTIFICATION BY MASS SPECTROMETRY</scope>
    <scope>AMIDATION AT PHE-13</scope>
    <source>
        <tissue evidence="2">Skin secretion</tissue>
    </source>
</reference>
<organism evidence="2">
    <name type="scientific">Pelophylax ridibundus</name>
    <name type="common">Marsh frog</name>
    <name type="synonym">Rana ridibunda</name>
    <dbReference type="NCBI Taxonomy" id="8406"/>
    <lineage>
        <taxon>Eukaryota</taxon>
        <taxon>Metazoa</taxon>
        <taxon>Chordata</taxon>
        <taxon>Craniata</taxon>
        <taxon>Vertebrata</taxon>
        <taxon>Euteleostomi</taxon>
        <taxon>Amphibia</taxon>
        <taxon>Batrachia</taxon>
        <taxon>Anura</taxon>
        <taxon>Neobatrachia</taxon>
        <taxon>Ranoidea</taxon>
        <taxon>Ranidae</taxon>
        <taxon>Pelophylax</taxon>
    </lineage>
</organism>